<gene>
    <name evidence="2" type="primary">tuf</name>
    <name type="ordered locus">Mjls_1015</name>
</gene>
<accession>A3PV96</accession>
<keyword id="KW-0963">Cytoplasm</keyword>
<keyword id="KW-0251">Elongation factor</keyword>
<keyword id="KW-0342">GTP-binding</keyword>
<keyword id="KW-0378">Hydrolase</keyword>
<keyword id="KW-0460">Magnesium</keyword>
<keyword id="KW-0479">Metal-binding</keyword>
<keyword id="KW-0547">Nucleotide-binding</keyword>
<keyword id="KW-0648">Protein biosynthesis</keyword>
<name>EFTU_MYCSJ</name>
<reference key="1">
    <citation type="submission" date="2007-02" db="EMBL/GenBank/DDBJ databases">
        <title>Complete sequence of Mycobacterium sp. JLS.</title>
        <authorList>
            <consortium name="US DOE Joint Genome Institute"/>
            <person name="Copeland A."/>
            <person name="Lucas S."/>
            <person name="Lapidus A."/>
            <person name="Barry K."/>
            <person name="Detter J.C."/>
            <person name="Glavina del Rio T."/>
            <person name="Hammon N."/>
            <person name="Israni S."/>
            <person name="Dalin E."/>
            <person name="Tice H."/>
            <person name="Pitluck S."/>
            <person name="Chain P."/>
            <person name="Malfatti S."/>
            <person name="Shin M."/>
            <person name="Vergez L."/>
            <person name="Schmutz J."/>
            <person name="Larimer F."/>
            <person name="Land M."/>
            <person name="Hauser L."/>
            <person name="Kyrpides N."/>
            <person name="Mikhailova N."/>
            <person name="Miller C.D."/>
            <person name="Anderson A.J."/>
            <person name="Sims R.C."/>
            <person name="Richardson P."/>
        </authorList>
    </citation>
    <scope>NUCLEOTIDE SEQUENCE [LARGE SCALE GENOMIC DNA]</scope>
    <source>
        <strain>JLS</strain>
    </source>
</reference>
<comment type="function">
    <text evidence="2">GTP hydrolase that promotes the GTP-dependent binding of aminoacyl-tRNA to the A-site of ribosomes during protein biosynthesis.</text>
</comment>
<comment type="catalytic activity">
    <reaction evidence="2">
        <text>GTP + H2O = GDP + phosphate + H(+)</text>
        <dbReference type="Rhea" id="RHEA:19669"/>
        <dbReference type="ChEBI" id="CHEBI:15377"/>
        <dbReference type="ChEBI" id="CHEBI:15378"/>
        <dbReference type="ChEBI" id="CHEBI:37565"/>
        <dbReference type="ChEBI" id="CHEBI:43474"/>
        <dbReference type="ChEBI" id="CHEBI:58189"/>
        <dbReference type="EC" id="3.6.5.3"/>
    </reaction>
    <physiologicalReaction direction="left-to-right" evidence="2">
        <dbReference type="Rhea" id="RHEA:19670"/>
    </physiologicalReaction>
</comment>
<comment type="subunit">
    <text evidence="2">Monomer.</text>
</comment>
<comment type="subcellular location">
    <subcellularLocation>
        <location evidence="2">Cytoplasm</location>
    </subcellularLocation>
</comment>
<comment type="similarity">
    <text evidence="2">Belongs to the TRAFAC class translation factor GTPase superfamily. Classic translation factor GTPase family. EF-Tu/EF-1A subfamily.</text>
</comment>
<evidence type="ECO:0000250" key="1"/>
<evidence type="ECO:0000255" key="2">
    <source>
        <dbReference type="HAMAP-Rule" id="MF_00118"/>
    </source>
</evidence>
<proteinExistence type="inferred from homology"/>
<dbReference type="EC" id="3.6.5.3" evidence="2"/>
<dbReference type="EMBL" id="CP000580">
    <property type="protein sequence ID" value="ABN96823.1"/>
    <property type="molecule type" value="Genomic_DNA"/>
</dbReference>
<dbReference type="SMR" id="A3PV96"/>
<dbReference type="KEGG" id="mjl:Mjls_1015"/>
<dbReference type="HOGENOM" id="CLU_007265_0_1_11"/>
<dbReference type="BioCyc" id="MSP164757:G1G8C-1027-MONOMER"/>
<dbReference type="GO" id="GO:0005829">
    <property type="term" value="C:cytosol"/>
    <property type="evidence" value="ECO:0007669"/>
    <property type="project" value="TreeGrafter"/>
</dbReference>
<dbReference type="GO" id="GO:0005525">
    <property type="term" value="F:GTP binding"/>
    <property type="evidence" value="ECO:0007669"/>
    <property type="project" value="UniProtKB-UniRule"/>
</dbReference>
<dbReference type="GO" id="GO:0003924">
    <property type="term" value="F:GTPase activity"/>
    <property type="evidence" value="ECO:0007669"/>
    <property type="project" value="InterPro"/>
</dbReference>
<dbReference type="GO" id="GO:0003746">
    <property type="term" value="F:translation elongation factor activity"/>
    <property type="evidence" value="ECO:0007669"/>
    <property type="project" value="UniProtKB-UniRule"/>
</dbReference>
<dbReference type="CDD" id="cd01884">
    <property type="entry name" value="EF_Tu"/>
    <property type="match status" value="1"/>
</dbReference>
<dbReference type="CDD" id="cd03697">
    <property type="entry name" value="EFTU_II"/>
    <property type="match status" value="1"/>
</dbReference>
<dbReference type="CDD" id="cd03707">
    <property type="entry name" value="EFTU_III"/>
    <property type="match status" value="1"/>
</dbReference>
<dbReference type="FunFam" id="2.40.30.10:FF:000001">
    <property type="entry name" value="Elongation factor Tu"/>
    <property type="match status" value="1"/>
</dbReference>
<dbReference type="FunFam" id="3.40.50.300:FF:000003">
    <property type="entry name" value="Elongation factor Tu"/>
    <property type="match status" value="1"/>
</dbReference>
<dbReference type="Gene3D" id="3.40.50.300">
    <property type="entry name" value="P-loop containing nucleotide triphosphate hydrolases"/>
    <property type="match status" value="1"/>
</dbReference>
<dbReference type="Gene3D" id="2.40.30.10">
    <property type="entry name" value="Translation factors"/>
    <property type="match status" value="2"/>
</dbReference>
<dbReference type="HAMAP" id="MF_00118_B">
    <property type="entry name" value="EF_Tu_B"/>
    <property type="match status" value="1"/>
</dbReference>
<dbReference type="InterPro" id="IPR041709">
    <property type="entry name" value="EF-Tu_GTP-bd"/>
</dbReference>
<dbReference type="InterPro" id="IPR050055">
    <property type="entry name" value="EF-Tu_GTPase"/>
</dbReference>
<dbReference type="InterPro" id="IPR004161">
    <property type="entry name" value="EFTu-like_2"/>
</dbReference>
<dbReference type="InterPro" id="IPR033720">
    <property type="entry name" value="EFTU_2"/>
</dbReference>
<dbReference type="InterPro" id="IPR031157">
    <property type="entry name" value="G_TR_CS"/>
</dbReference>
<dbReference type="InterPro" id="IPR027417">
    <property type="entry name" value="P-loop_NTPase"/>
</dbReference>
<dbReference type="InterPro" id="IPR005225">
    <property type="entry name" value="Small_GTP-bd"/>
</dbReference>
<dbReference type="InterPro" id="IPR000795">
    <property type="entry name" value="T_Tr_GTP-bd_dom"/>
</dbReference>
<dbReference type="InterPro" id="IPR009000">
    <property type="entry name" value="Transl_B-barrel_sf"/>
</dbReference>
<dbReference type="InterPro" id="IPR009001">
    <property type="entry name" value="Transl_elong_EF1A/Init_IF2_C"/>
</dbReference>
<dbReference type="InterPro" id="IPR004541">
    <property type="entry name" value="Transl_elong_EFTu/EF1A_bac/org"/>
</dbReference>
<dbReference type="InterPro" id="IPR004160">
    <property type="entry name" value="Transl_elong_EFTu/EF1A_C"/>
</dbReference>
<dbReference type="NCBIfam" id="TIGR00485">
    <property type="entry name" value="EF-Tu"/>
    <property type="match status" value="1"/>
</dbReference>
<dbReference type="NCBIfam" id="NF000766">
    <property type="entry name" value="PRK00049.1"/>
    <property type="match status" value="1"/>
</dbReference>
<dbReference type="NCBIfam" id="NF009372">
    <property type="entry name" value="PRK12735.1"/>
    <property type="match status" value="1"/>
</dbReference>
<dbReference type="NCBIfam" id="NF009373">
    <property type="entry name" value="PRK12736.1"/>
    <property type="match status" value="1"/>
</dbReference>
<dbReference type="NCBIfam" id="TIGR00231">
    <property type="entry name" value="small_GTP"/>
    <property type="match status" value="1"/>
</dbReference>
<dbReference type="PANTHER" id="PTHR43721:SF22">
    <property type="entry name" value="ELONGATION FACTOR TU, MITOCHONDRIAL"/>
    <property type="match status" value="1"/>
</dbReference>
<dbReference type="PANTHER" id="PTHR43721">
    <property type="entry name" value="ELONGATION FACTOR TU-RELATED"/>
    <property type="match status" value="1"/>
</dbReference>
<dbReference type="Pfam" id="PF00009">
    <property type="entry name" value="GTP_EFTU"/>
    <property type="match status" value="1"/>
</dbReference>
<dbReference type="Pfam" id="PF03144">
    <property type="entry name" value="GTP_EFTU_D2"/>
    <property type="match status" value="1"/>
</dbReference>
<dbReference type="Pfam" id="PF03143">
    <property type="entry name" value="GTP_EFTU_D3"/>
    <property type="match status" value="1"/>
</dbReference>
<dbReference type="PRINTS" id="PR00315">
    <property type="entry name" value="ELONGATNFCT"/>
</dbReference>
<dbReference type="SUPFAM" id="SSF50465">
    <property type="entry name" value="EF-Tu/eEF-1alpha/eIF2-gamma C-terminal domain"/>
    <property type="match status" value="1"/>
</dbReference>
<dbReference type="SUPFAM" id="SSF52540">
    <property type="entry name" value="P-loop containing nucleoside triphosphate hydrolases"/>
    <property type="match status" value="1"/>
</dbReference>
<dbReference type="SUPFAM" id="SSF50447">
    <property type="entry name" value="Translation proteins"/>
    <property type="match status" value="1"/>
</dbReference>
<dbReference type="PROSITE" id="PS00301">
    <property type="entry name" value="G_TR_1"/>
    <property type="match status" value="1"/>
</dbReference>
<dbReference type="PROSITE" id="PS51722">
    <property type="entry name" value="G_TR_2"/>
    <property type="match status" value="1"/>
</dbReference>
<organism>
    <name type="scientific">Mycobacterium sp. (strain JLS)</name>
    <dbReference type="NCBI Taxonomy" id="164757"/>
    <lineage>
        <taxon>Bacteria</taxon>
        <taxon>Bacillati</taxon>
        <taxon>Actinomycetota</taxon>
        <taxon>Actinomycetes</taxon>
        <taxon>Mycobacteriales</taxon>
        <taxon>Mycobacteriaceae</taxon>
        <taxon>Mycobacterium</taxon>
    </lineage>
</organism>
<sequence>MAKAKFERTKPHVNIGTIGHVDHGKTTLTAAITKVLHDKYPELNESRAFDQIDNAPEERQRGITINISHVEYQTEKRHYAHVDAPGHADYIKNMITGAAQMDGAILVVAATDGPMPQTREHVLLARQVGVPYILVALNKADAVDDEELIELVEMEVRELLAAQDFDEDAPVVRVSALKALEGDEKWVKSVEELMDAVDESIPDPVRDTDRPFLMPVEDVFTITGRGTVVTGRVERGVVNVNEEVEIVGIRPGTTKTTVTGVEMFRKLLDQGQAGDNVGLLLRGIKREDVERGQVVVKPGTTTPHTEFDGQVYILSKDEGGRHTPFFNNYRPQFYFRTTDVTGVVTLPEGTEMVMPGDNTDISVKLIQPVAMDEGLRFAIREGGRTVGAGRVTKIHK</sequence>
<feature type="chain" id="PRO_1000015704" description="Elongation factor Tu">
    <location>
        <begin position="1"/>
        <end position="396"/>
    </location>
</feature>
<feature type="domain" description="tr-type G">
    <location>
        <begin position="10"/>
        <end position="205"/>
    </location>
</feature>
<feature type="region of interest" description="G1" evidence="1">
    <location>
        <begin position="19"/>
        <end position="26"/>
    </location>
</feature>
<feature type="region of interest" description="G2" evidence="1">
    <location>
        <begin position="62"/>
        <end position="66"/>
    </location>
</feature>
<feature type="region of interest" description="G3" evidence="1">
    <location>
        <begin position="83"/>
        <end position="86"/>
    </location>
</feature>
<feature type="region of interest" description="G4" evidence="1">
    <location>
        <begin position="138"/>
        <end position="141"/>
    </location>
</feature>
<feature type="region of interest" description="G5" evidence="1">
    <location>
        <begin position="175"/>
        <end position="177"/>
    </location>
</feature>
<feature type="binding site" evidence="2">
    <location>
        <begin position="19"/>
        <end position="26"/>
    </location>
    <ligand>
        <name>GTP</name>
        <dbReference type="ChEBI" id="CHEBI:37565"/>
    </ligand>
</feature>
<feature type="binding site" evidence="2">
    <location>
        <position position="26"/>
    </location>
    <ligand>
        <name>Mg(2+)</name>
        <dbReference type="ChEBI" id="CHEBI:18420"/>
    </ligand>
</feature>
<feature type="binding site" evidence="2">
    <location>
        <begin position="83"/>
        <end position="87"/>
    </location>
    <ligand>
        <name>GTP</name>
        <dbReference type="ChEBI" id="CHEBI:37565"/>
    </ligand>
</feature>
<feature type="binding site" evidence="2">
    <location>
        <begin position="138"/>
        <end position="141"/>
    </location>
    <ligand>
        <name>GTP</name>
        <dbReference type="ChEBI" id="CHEBI:37565"/>
    </ligand>
</feature>
<protein>
    <recommendedName>
        <fullName evidence="2">Elongation factor Tu</fullName>
        <shortName evidence="2">EF-Tu</shortName>
        <ecNumber evidence="2">3.6.5.3</ecNumber>
    </recommendedName>
</protein>